<name>FTSQ_SYNC1</name>
<protein>
    <recommendedName>
        <fullName evidence="1">Cell division protein FtsQ</fullName>
    </recommendedName>
</protein>
<gene>
    <name evidence="1" type="primary">ftsQ</name>
    <name type="ordered locus">Pcar_2198</name>
</gene>
<accession>Q3A2H0</accession>
<feature type="chain" id="PRO_0000414686" description="Cell division protein FtsQ">
    <location>
        <begin position="1"/>
        <end position="282"/>
    </location>
</feature>
<feature type="topological domain" description="Cytoplasmic" evidence="1">
    <location>
        <begin position="1"/>
        <end position="30"/>
    </location>
</feature>
<feature type="transmembrane region" description="Helical" evidence="1">
    <location>
        <begin position="31"/>
        <end position="51"/>
    </location>
</feature>
<feature type="topological domain" description="Periplasmic" evidence="1">
    <location>
        <begin position="52"/>
        <end position="282"/>
    </location>
</feature>
<feature type="domain" description="POTRA" evidence="2">
    <location>
        <begin position="65"/>
        <end position="133"/>
    </location>
</feature>
<reference key="1">
    <citation type="submission" date="2005-10" db="EMBL/GenBank/DDBJ databases">
        <title>Complete sequence of Pelobacter carbinolicus DSM 2380.</title>
        <authorList>
            <person name="Copeland A."/>
            <person name="Lucas S."/>
            <person name="Lapidus A."/>
            <person name="Barry K."/>
            <person name="Detter J.C."/>
            <person name="Glavina T."/>
            <person name="Hammon N."/>
            <person name="Israni S."/>
            <person name="Pitluck S."/>
            <person name="Chertkov O."/>
            <person name="Schmutz J."/>
            <person name="Larimer F."/>
            <person name="Land M."/>
            <person name="Kyrpides N."/>
            <person name="Ivanova N."/>
            <person name="Richardson P."/>
        </authorList>
    </citation>
    <scope>NUCLEOTIDE SEQUENCE [LARGE SCALE GENOMIC DNA]</scope>
    <source>
        <strain>DSM 2380 / NBRC 103641 / GraBd1</strain>
    </source>
</reference>
<evidence type="ECO:0000255" key="1">
    <source>
        <dbReference type="HAMAP-Rule" id="MF_00911"/>
    </source>
</evidence>
<evidence type="ECO:0000255" key="2">
    <source>
        <dbReference type="PROSITE-ProRule" id="PRU01115"/>
    </source>
</evidence>
<proteinExistence type="inferred from homology"/>
<comment type="function">
    <text evidence="1">Essential cell division protein.</text>
</comment>
<comment type="subcellular location">
    <subcellularLocation>
        <location evidence="1">Cell inner membrane</location>
        <topology evidence="1">Single-pass type II membrane protein</topology>
    </subcellularLocation>
    <text evidence="1">Localizes to the division septum.</text>
</comment>
<comment type="similarity">
    <text evidence="1">Belongs to the FtsQ/DivIB family. FtsQ subfamily.</text>
</comment>
<sequence>MINIGPPKKRRLRRKGNRFKKTRRVIPWRRLMIGALWGTMALASLGMVVAVACFAGQMLFASDYFKVERIQVENNRRIGREEILALSDICPGTNIFELDLERVSTRIEKNPWIASARVRRMFPDQLVIRVDERIPKAIVRLDFMYYLDASGHVFKRLEKGDRLDFPVISGVDRQALLEGNEATLSQIDKALRLLDRLDGRKIFAIDDVSELSLDDTTGITLYTCIGGVPVRMGHDDYNSKLNRLEKIFPQLKTRLGLIDYIDTNVTRRIIVKLDAGELRGKG</sequence>
<organism>
    <name type="scientific">Syntrophotalea carbinolica (strain DSM 2380 / NBRC 103641 / GraBd1)</name>
    <name type="common">Pelobacter carbinolicus</name>
    <dbReference type="NCBI Taxonomy" id="338963"/>
    <lineage>
        <taxon>Bacteria</taxon>
        <taxon>Pseudomonadati</taxon>
        <taxon>Thermodesulfobacteriota</taxon>
        <taxon>Desulfuromonadia</taxon>
        <taxon>Desulfuromonadales</taxon>
        <taxon>Syntrophotaleaceae</taxon>
        <taxon>Syntrophotalea</taxon>
    </lineage>
</organism>
<keyword id="KW-0131">Cell cycle</keyword>
<keyword id="KW-0132">Cell division</keyword>
<keyword id="KW-0997">Cell inner membrane</keyword>
<keyword id="KW-1003">Cell membrane</keyword>
<keyword id="KW-0472">Membrane</keyword>
<keyword id="KW-1185">Reference proteome</keyword>
<keyword id="KW-0812">Transmembrane</keyword>
<keyword id="KW-1133">Transmembrane helix</keyword>
<dbReference type="EMBL" id="CP000142">
    <property type="protein sequence ID" value="ABA89437.1"/>
    <property type="molecule type" value="Genomic_DNA"/>
</dbReference>
<dbReference type="RefSeq" id="WP_011341952.1">
    <property type="nucleotide sequence ID" value="NC_007498.2"/>
</dbReference>
<dbReference type="SMR" id="Q3A2H0"/>
<dbReference type="STRING" id="338963.Pcar_2198"/>
<dbReference type="KEGG" id="pca:Pcar_2198"/>
<dbReference type="eggNOG" id="COG1589">
    <property type="taxonomic scope" value="Bacteria"/>
</dbReference>
<dbReference type="HOGENOM" id="CLU_047677_3_0_7"/>
<dbReference type="OrthoDB" id="5510599at2"/>
<dbReference type="Proteomes" id="UP000002534">
    <property type="component" value="Chromosome"/>
</dbReference>
<dbReference type="GO" id="GO:0032153">
    <property type="term" value="C:cell division site"/>
    <property type="evidence" value="ECO:0007669"/>
    <property type="project" value="UniProtKB-UniRule"/>
</dbReference>
<dbReference type="GO" id="GO:0005886">
    <property type="term" value="C:plasma membrane"/>
    <property type="evidence" value="ECO:0007669"/>
    <property type="project" value="UniProtKB-SubCell"/>
</dbReference>
<dbReference type="GO" id="GO:0090529">
    <property type="term" value="P:cell septum assembly"/>
    <property type="evidence" value="ECO:0007669"/>
    <property type="project" value="InterPro"/>
</dbReference>
<dbReference type="GO" id="GO:0043093">
    <property type="term" value="P:FtsZ-dependent cytokinesis"/>
    <property type="evidence" value="ECO:0007669"/>
    <property type="project" value="UniProtKB-UniRule"/>
</dbReference>
<dbReference type="Gene3D" id="3.40.50.11690">
    <property type="entry name" value="Cell division protein FtsQ/DivIB"/>
    <property type="match status" value="1"/>
</dbReference>
<dbReference type="Gene3D" id="3.10.20.310">
    <property type="entry name" value="membrane protein fhac"/>
    <property type="match status" value="1"/>
</dbReference>
<dbReference type="HAMAP" id="MF_00911">
    <property type="entry name" value="FtsQ_subfam"/>
    <property type="match status" value="1"/>
</dbReference>
<dbReference type="InterPro" id="IPR005548">
    <property type="entry name" value="Cell_div_FtsQ/DivIB_C"/>
</dbReference>
<dbReference type="InterPro" id="IPR026579">
    <property type="entry name" value="FtsQ"/>
</dbReference>
<dbReference type="InterPro" id="IPR045335">
    <property type="entry name" value="FtsQ_C_sf"/>
</dbReference>
<dbReference type="InterPro" id="IPR034746">
    <property type="entry name" value="POTRA"/>
</dbReference>
<dbReference type="InterPro" id="IPR013685">
    <property type="entry name" value="POTRA_FtsQ_type"/>
</dbReference>
<dbReference type="PANTHER" id="PTHR35851">
    <property type="entry name" value="CELL DIVISION PROTEIN FTSQ"/>
    <property type="match status" value="1"/>
</dbReference>
<dbReference type="PANTHER" id="PTHR35851:SF1">
    <property type="entry name" value="CELL DIVISION PROTEIN FTSQ"/>
    <property type="match status" value="1"/>
</dbReference>
<dbReference type="Pfam" id="PF03799">
    <property type="entry name" value="FtsQ_DivIB_C"/>
    <property type="match status" value="1"/>
</dbReference>
<dbReference type="Pfam" id="PF08478">
    <property type="entry name" value="POTRA_1"/>
    <property type="match status" value="1"/>
</dbReference>
<dbReference type="PROSITE" id="PS51779">
    <property type="entry name" value="POTRA"/>
    <property type="match status" value="1"/>
</dbReference>